<evidence type="ECO:0000250" key="1"/>
<evidence type="ECO:0000255" key="2">
    <source>
        <dbReference type="PROSITE-ProRule" id="PRU00978"/>
    </source>
</evidence>
<evidence type="ECO:0000256" key="3">
    <source>
        <dbReference type="SAM" id="MobiDB-lite"/>
    </source>
</evidence>
<evidence type="ECO:0000305" key="4"/>
<protein>
    <recommendedName>
        <fullName>Basic leucine zipper transcriptional factor ATF-like</fullName>
    </recommendedName>
    <alternativeName>
        <fullName>B-cell-activating transcription factor</fullName>
        <shortName>B-ATF</shortName>
    </alternativeName>
</protein>
<sequence>MQQESDRNEQGYSSSPPSSNKQDSSDDTKKNHRREKNRIAAQKSRQRQTEKADSLHIESENLERLNSALRGEISGLREELKYLTCVLSTHQPVCVLGPTKPQAILPHVGSTRYQH</sequence>
<feature type="chain" id="PRO_0000420466" description="Basic leucine zipper transcriptional factor ATF-like">
    <location>
        <begin position="1"/>
        <end position="115"/>
    </location>
</feature>
<feature type="domain" description="bZIP" evidence="2">
    <location>
        <begin position="27"/>
        <end position="90"/>
    </location>
</feature>
<feature type="region of interest" description="Disordered" evidence="3">
    <location>
        <begin position="1"/>
        <end position="60"/>
    </location>
</feature>
<feature type="region of interest" description="Basic motif">
    <location>
        <begin position="29"/>
        <end position="51"/>
    </location>
</feature>
<feature type="region of interest" description="Leucine-zipper">
    <location>
        <begin position="55"/>
        <end position="83"/>
    </location>
</feature>
<feature type="compositionally biased region" description="Low complexity" evidence="3">
    <location>
        <begin position="13"/>
        <end position="22"/>
    </location>
</feature>
<feature type="compositionally biased region" description="Basic and acidic residues" evidence="3">
    <location>
        <begin position="47"/>
        <end position="60"/>
    </location>
</feature>
<dbReference type="EMBL" id="BC129757">
    <property type="protein sequence ID" value="AAI29758.1"/>
    <property type="molecule type" value="mRNA"/>
</dbReference>
<dbReference type="RefSeq" id="NP_001091208.1">
    <property type="nucleotide sequence ID" value="NM_001097739.1"/>
</dbReference>
<dbReference type="SMR" id="A1L2X1"/>
<dbReference type="DNASU" id="100036977"/>
<dbReference type="GeneID" id="100036977"/>
<dbReference type="KEGG" id="xla:100036977"/>
<dbReference type="AGR" id="Xenbase:XB-GENE-6255842"/>
<dbReference type="CTD" id="100036977"/>
<dbReference type="Xenbase" id="XB-GENE-6255842">
    <property type="gene designation" value="batf.L"/>
</dbReference>
<dbReference type="OMA" id="APQTTHD"/>
<dbReference type="OrthoDB" id="295274at2759"/>
<dbReference type="Proteomes" id="UP000186698">
    <property type="component" value="Chromosome 8L"/>
</dbReference>
<dbReference type="Bgee" id="100036977">
    <property type="expression patterns" value="Expressed in spleen and 6 other cell types or tissues"/>
</dbReference>
<dbReference type="GO" id="GO:0005737">
    <property type="term" value="C:cytoplasm"/>
    <property type="evidence" value="ECO:0000250"/>
    <property type="project" value="UniProtKB"/>
</dbReference>
<dbReference type="GO" id="GO:0005634">
    <property type="term" value="C:nucleus"/>
    <property type="evidence" value="ECO:0000250"/>
    <property type="project" value="UniProtKB"/>
</dbReference>
<dbReference type="GO" id="GO:0003700">
    <property type="term" value="F:DNA-binding transcription factor activity"/>
    <property type="evidence" value="ECO:0000250"/>
    <property type="project" value="UniProtKB"/>
</dbReference>
<dbReference type="GO" id="GO:0000981">
    <property type="term" value="F:DNA-binding transcription factor activity, RNA polymerase II-specific"/>
    <property type="evidence" value="ECO:0000318"/>
    <property type="project" value="GO_Central"/>
</dbReference>
<dbReference type="GO" id="GO:0000978">
    <property type="term" value="F:RNA polymerase II cis-regulatory region sequence-specific DNA binding"/>
    <property type="evidence" value="ECO:0000318"/>
    <property type="project" value="GO_Central"/>
</dbReference>
<dbReference type="GO" id="GO:0043565">
    <property type="term" value="F:sequence-specific DNA binding"/>
    <property type="evidence" value="ECO:0000250"/>
    <property type="project" value="UniProtKB"/>
</dbReference>
<dbReference type="GO" id="GO:0042832">
    <property type="term" value="P:defense response to protozoan"/>
    <property type="evidence" value="ECO:0000250"/>
    <property type="project" value="UniProtKB"/>
</dbReference>
<dbReference type="GO" id="GO:0006974">
    <property type="term" value="P:DNA damage response"/>
    <property type="evidence" value="ECO:0000250"/>
    <property type="project" value="UniProtKB"/>
</dbReference>
<dbReference type="GO" id="GO:0030330">
    <property type="term" value="P:DNA damage response, signal transduction by p53 class mediator"/>
    <property type="evidence" value="ECO:0000250"/>
    <property type="project" value="UniProtKB"/>
</dbReference>
<dbReference type="GO" id="GO:0060218">
    <property type="term" value="P:hematopoietic stem cell differentiation"/>
    <property type="evidence" value="ECO:0000250"/>
    <property type="project" value="UniProtKB"/>
</dbReference>
<dbReference type="GO" id="GO:0045190">
    <property type="term" value="P:isotype switching"/>
    <property type="evidence" value="ECO:0000250"/>
    <property type="project" value="UniProtKB"/>
</dbReference>
<dbReference type="GO" id="GO:0002320">
    <property type="term" value="P:lymphoid progenitor cell differentiation"/>
    <property type="evidence" value="ECO:0000250"/>
    <property type="project" value="UniProtKB"/>
</dbReference>
<dbReference type="GO" id="GO:0043011">
    <property type="term" value="P:myeloid dendritic cell differentiation"/>
    <property type="evidence" value="ECO:0000250"/>
    <property type="project" value="UniProtKB"/>
</dbReference>
<dbReference type="GO" id="GO:0001819">
    <property type="term" value="P:positive regulation of cytokine production"/>
    <property type="evidence" value="ECO:0000250"/>
    <property type="project" value="UniProtKB"/>
</dbReference>
<dbReference type="GO" id="GO:0006357">
    <property type="term" value="P:regulation of transcription by RNA polymerase II"/>
    <property type="evidence" value="ECO:0000318"/>
    <property type="project" value="GO_Central"/>
</dbReference>
<dbReference type="GO" id="GO:0072539">
    <property type="term" value="P:T-helper 17 cell differentiation"/>
    <property type="evidence" value="ECO:0000250"/>
    <property type="project" value="UniProtKB"/>
</dbReference>
<dbReference type="GO" id="GO:0072540">
    <property type="term" value="P:T-helper 17 cell lineage commitment"/>
    <property type="evidence" value="ECO:0000250"/>
    <property type="project" value="UniProtKB"/>
</dbReference>
<dbReference type="GO" id="GO:0045064">
    <property type="term" value="P:T-helper 2 cell differentiation"/>
    <property type="evidence" value="ECO:0000250"/>
    <property type="project" value="UniProtKB"/>
</dbReference>
<dbReference type="CDD" id="cd14701">
    <property type="entry name" value="bZIP_BATF"/>
    <property type="match status" value="1"/>
</dbReference>
<dbReference type="FunFam" id="1.20.5.170:FF:000043">
    <property type="entry name" value="Basic leucine zipper transcriptional factor ATF-like"/>
    <property type="match status" value="1"/>
</dbReference>
<dbReference type="Gene3D" id="1.20.5.170">
    <property type="match status" value="1"/>
</dbReference>
<dbReference type="InterPro" id="IPR000837">
    <property type="entry name" value="AP-1"/>
</dbReference>
<dbReference type="InterPro" id="IPR004827">
    <property type="entry name" value="bZIP"/>
</dbReference>
<dbReference type="InterPro" id="IPR046347">
    <property type="entry name" value="bZIP_sf"/>
</dbReference>
<dbReference type="PANTHER" id="PTHR23351:SF14">
    <property type="entry name" value="BASIC LEUCINE ZIPPER TRANSCRIPTIONAL FACTOR ATF-LIKE"/>
    <property type="match status" value="1"/>
</dbReference>
<dbReference type="PANTHER" id="PTHR23351">
    <property type="entry name" value="FOS TRANSCRIPTION FACTOR-RELATED"/>
    <property type="match status" value="1"/>
</dbReference>
<dbReference type="Pfam" id="PF00170">
    <property type="entry name" value="bZIP_1"/>
    <property type="match status" value="1"/>
</dbReference>
<dbReference type="PRINTS" id="PR00042">
    <property type="entry name" value="LEUZIPPRFOS"/>
</dbReference>
<dbReference type="SMART" id="SM00338">
    <property type="entry name" value="BRLZ"/>
    <property type="match status" value="1"/>
</dbReference>
<dbReference type="SUPFAM" id="SSF57959">
    <property type="entry name" value="Leucine zipper domain"/>
    <property type="match status" value="1"/>
</dbReference>
<dbReference type="PROSITE" id="PS50217">
    <property type="entry name" value="BZIP"/>
    <property type="match status" value="1"/>
</dbReference>
<dbReference type="PROSITE" id="PS00036">
    <property type="entry name" value="BZIP_BASIC"/>
    <property type="match status" value="1"/>
</dbReference>
<organism>
    <name type="scientific">Xenopus laevis</name>
    <name type="common">African clawed frog</name>
    <dbReference type="NCBI Taxonomy" id="8355"/>
    <lineage>
        <taxon>Eukaryota</taxon>
        <taxon>Metazoa</taxon>
        <taxon>Chordata</taxon>
        <taxon>Craniata</taxon>
        <taxon>Vertebrata</taxon>
        <taxon>Euteleostomi</taxon>
        <taxon>Amphibia</taxon>
        <taxon>Batrachia</taxon>
        <taxon>Anura</taxon>
        <taxon>Pipoidea</taxon>
        <taxon>Pipidae</taxon>
        <taxon>Xenopodinae</taxon>
        <taxon>Xenopus</taxon>
        <taxon>Xenopus</taxon>
    </lineage>
</organism>
<keyword id="KW-0010">Activator</keyword>
<keyword id="KW-0963">Cytoplasm</keyword>
<keyword id="KW-0221">Differentiation</keyword>
<keyword id="KW-0238">DNA-binding</keyword>
<keyword id="KW-0539">Nucleus</keyword>
<keyword id="KW-1185">Reference proteome</keyword>
<keyword id="KW-0678">Repressor</keyword>
<keyword id="KW-0804">Transcription</keyword>
<keyword id="KW-0805">Transcription regulation</keyword>
<reference key="1">
    <citation type="submission" date="2006-12" db="EMBL/GenBank/DDBJ databases">
        <authorList>
            <consortium name="NIH - Xenopus Gene Collection (XGC) project"/>
        </authorList>
    </citation>
    <scope>NUCLEOTIDE SEQUENCE [LARGE SCALE MRNA]</scope>
    <source>
        <tissue>Spleen</tissue>
    </source>
</reference>
<gene>
    <name type="primary">batf</name>
</gene>
<accession>A1L2X1</accession>
<comment type="function">
    <text evidence="1">AP-1 family transcription factor that controls the differentiation of lineage-specific cells in the immune system: specifically mediates the differentiation of T-helper 17 cells (Th17), follicular T-helper cells (TfH), CD8(+) dendritic cells and class-switch recombination (CSR) in B-cells.</text>
</comment>
<comment type="subcellular location">
    <subcellularLocation>
        <location evidence="2">Nucleus</location>
    </subcellularLocation>
    <subcellularLocation>
        <location evidence="1">Cytoplasm</location>
    </subcellularLocation>
    <text evidence="1">Present in the nucleus and cytoplasm, but shows increased nuclear translocation after activation of T-cells.</text>
</comment>
<comment type="similarity">
    <text evidence="4">Belongs to the bZIP family.</text>
</comment>
<name>BATF_XENLA</name>
<proteinExistence type="inferred from homology"/>